<comment type="function">
    <text evidence="2">Catalyzes the oxidative phosphorylation of glyceraldehyde 3-phosphate (G3P) to 1,3-bisphosphoglycerate (BPG) using the cofactor NAD. The first reaction step involves the formation of a hemiacetal intermediate between G3P and a cysteine residue, and this hemiacetal intermediate is then oxidized to a thioester, with concomitant reduction of NAD to NADH. The reduced NADH is then exchanged with the second NAD, and the thioester is attacked by a nucleophilic inorganic phosphate to produce BPG.</text>
</comment>
<comment type="catalytic activity">
    <reaction evidence="2">
        <text>D-glyceraldehyde 3-phosphate + phosphate + NAD(+) = (2R)-3-phospho-glyceroyl phosphate + NADH + H(+)</text>
        <dbReference type="Rhea" id="RHEA:10300"/>
        <dbReference type="ChEBI" id="CHEBI:15378"/>
        <dbReference type="ChEBI" id="CHEBI:43474"/>
        <dbReference type="ChEBI" id="CHEBI:57540"/>
        <dbReference type="ChEBI" id="CHEBI:57604"/>
        <dbReference type="ChEBI" id="CHEBI:57945"/>
        <dbReference type="ChEBI" id="CHEBI:59776"/>
        <dbReference type="EC" id="1.2.1.12"/>
    </reaction>
</comment>
<comment type="pathway">
    <text evidence="3">Carbohydrate degradation; glycolysis; pyruvate from D-glyceraldehyde 3-phosphate: step 1/5.</text>
</comment>
<comment type="subunit">
    <text evidence="2">Homotetramer.</text>
</comment>
<comment type="subcellular location">
    <subcellularLocation>
        <location evidence="3">Cytoplasm</location>
    </subcellularLocation>
</comment>
<comment type="similarity">
    <text evidence="3">Belongs to the glyceraldehyde-3-phosphate dehydrogenase family.</text>
</comment>
<feature type="initiator methionine" description="Removed" evidence="1">
    <location>
        <position position="1"/>
    </location>
</feature>
<feature type="chain" id="PRO_0000145676" description="Glyceraldehyde-3-phosphate dehydrogenase">
    <location>
        <begin position="2"/>
        <end position="331"/>
    </location>
</feature>
<feature type="active site" description="Nucleophile" evidence="2">
    <location>
        <position position="150"/>
    </location>
</feature>
<feature type="binding site" evidence="2">
    <location>
        <begin position="12"/>
        <end position="13"/>
    </location>
    <ligand>
        <name>NAD(+)</name>
        <dbReference type="ChEBI" id="CHEBI:57540"/>
    </ligand>
</feature>
<feature type="binding site" evidence="2">
    <location>
        <position position="34"/>
    </location>
    <ligand>
        <name>NAD(+)</name>
        <dbReference type="ChEBI" id="CHEBI:57540"/>
    </ligand>
</feature>
<feature type="binding site" evidence="2">
    <location>
        <position position="78"/>
    </location>
    <ligand>
        <name>NAD(+)</name>
        <dbReference type="ChEBI" id="CHEBI:57540"/>
    </ligand>
</feature>
<feature type="binding site" evidence="2">
    <location>
        <position position="120"/>
    </location>
    <ligand>
        <name>NAD(+)</name>
        <dbReference type="ChEBI" id="CHEBI:57540"/>
    </ligand>
</feature>
<feature type="binding site" evidence="2">
    <location>
        <begin position="149"/>
        <end position="151"/>
    </location>
    <ligand>
        <name>D-glyceraldehyde 3-phosphate</name>
        <dbReference type="ChEBI" id="CHEBI:59776"/>
    </ligand>
</feature>
<feature type="binding site" evidence="2">
    <location>
        <position position="180"/>
    </location>
    <ligand>
        <name>D-glyceraldehyde 3-phosphate</name>
        <dbReference type="ChEBI" id="CHEBI:59776"/>
    </ligand>
</feature>
<feature type="binding site" evidence="2">
    <location>
        <begin position="209"/>
        <end position="210"/>
    </location>
    <ligand>
        <name>D-glyceraldehyde 3-phosphate</name>
        <dbReference type="ChEBI" id="CHEBI:59776"/>
    </ligand>
</feature>
<feature type="binding site" evidence="2">
    <location>
        <position position="232"/>
    </location>
    <ligand>
        <name>D-glyceraldehyde 3-phosphate</name>
        <dbReference type="ChEBI" id="CHEBI:59776"/>
    </ligand>
</feature>
<feature type="binding site" evidence="2">
    <location>
        <position position="314"/>
    </location>
    <ligand>
        <name>NAD(+)</name>
        <dbReference type="ChEBI" id="CHEBI:57540"/>
    </ligand>
</feature>
<feature type="site" description="Activates thiol group during catalysis" evidence="2">
    <location>
        <position position="177"/>
    </location>
</feature>
<proteinExistence type="inferred from homology"/>
<reference key="1">
    <citation type="journal article" date="2001" name="Nature">
        <title>Complete genome sequence of a multiple drug resistant Salmonella enterica serovar Typhi CT18.</title>
        <authorList>
            <person name="Parkhill J."/>
            <person name="Dougan G."/>
            <person name="James K.D."/>
            <person name="Thomson N.R."/>
            <person name="Pickard D."/>
            <person name="Wain J."/>
            <person name="Churcher C.M."/>
            <person name="Mungall K.L."/>
            <person name="Bentley S.D."/>
            <person name="Holden M.T.G."/>
            <person name="Sebaihia M."/>
            <person name="Baker S."/>
            <person name="Basham D."/>
            <person name="Brooks K."/>
            <person name="Chillingworth T."/>
            <person name="Connerton P."/>
            <person name="Cronin A."/>
            <person name="Davis P."/>
            <person name="Davies R.M."/>
            <person name="Dowd L."/>
            <person name="White N."/>
            <person name="Farrar J."/>
            <person name="Feltwell T."/>
            <person name="Hamlin N."/>
            <person name="Haque A."/>
            <person name="Hien T.T."/>
            <person name="Holroyd S."/>
            <person name="Jagels K."/>
            <person name="Krogh A."/>
            <person name="Larsen T.S."/>
            <person name="Leather S."/>
            <person name="Moule S."/>
            <person name="O'Gaora P."/>
            <person name="Parry C."/>
            <person name="Quail M.A."/>
            <person name="Rutherford K.M."/>
            <person name="Simmonds M."/>
            <person name="Skelton J."/>
            <person name="Stevens K."/>
            <person name="Whitehead S."/>
            <person name="Barrell B.G."/>
        </authorList>
    </citation>
    <scope>NUCLEOTIDE SEQUENCE [LARGE SCALE GENOMIC DNA]</scope>
    <source>
        <strain>CT18</strain>
    </source>
</reference>
<reference key="2">
    <citation type="journal article" date="2003" name="J. Bacteriol.">
        <title>Comparative genomics of Salmonella enterica serovar Typhi strains Ty2 and CT18.</title>
        <authorList>
            <person name="Deng W."/>
            <person name="Liou S.-R."/>
            <person name="Plunkett G. III"/>
            <person name="Mayhew G.F."/>
            <person name="Rose D.J."/>
            <person name="Burland V."/>
            <person name="Kodoyianni V."/>
            <person name="Schwartz D.C."/>
            <person name="Blattner F.R."/>
        </authorList>
    </citation>
    <scope>NUCLEOTIDE SEQUENCE [LARGE SCALE GENOMIC DNA]</scope>
    <source>
        <strain>ATCC 700931 / Ty2</strain>
    </source>
</reference>
<protein>
    <recommendedName>
        <fullName evidence="2">Glyceraldehyde-3-phosphate dehydrogenase</fullName>
        <shortName evidence="2">GAPDH</shortName>
        <ecNumber evidence="2">1.2.1.12</ecNumber>
    </recommendedName>
    <alternativeName>
        <fullName evidence="2">NAD-dependent glyceraldehyde-3-phosphate dehydrogenase</fullName>
    </alternativeName>
</protein>
<gene>
    <name type="primary">gapA</name>
    <name type="synonym">gap</name>
    <name type="ordered locus">STY1825</name>
    <name type="ordered locus">t1169</name>
</gene>
<name>G3P_SALTI</name>
<sequence length="331" mass="35587">MTIKVGINGFGRIGRIVFRAAQKRSDIEIVAINDLLDAEYMAYMLKYDSTHGRFDGTVEVKDGHLIVNGKKIRVTAERDPANLKWDEVGVDVVAEATGIFLTDETARKHITAGAKKVVLTGPSKDNTPMFVKGANFDKYEGQDIVSNASCTTNCLAPLAKVINDNFGIIEGLMTTVHATTATQKTVDGPSHKDWRGGRGASQNIIPSSTGAAKAVGKVLPELNGKLTGMAFRVPTPNVSVVDLTVRLEKAATYEQIKAAVKAAAEGEMKGVLGYTEDDVVSTDFNGEVCTSVFDAKAGIALNDNFVKLVSWYDNETGYSNKVLDLIAHISK</sequence>
<dbReference type="EC" id="1.2.1.12" evidence="2"/>
<dbReference type="EMBL" id="AL513382">
    <property type="protein sequence ID" value="CAD02064.1"/>
    <property type="molecule type" value="Genomic_DNA"/>
</dbReference>
<dbReference type="EMBL" id="AE014613">
    <property type="protein sequence ID" value="AAO68826.1"/>
    <property type="molecule type" value="Genomic_DNA"/>
</dbReference>
<dbReference type="RefSeq" id="NP_456222.1">
    <property type="nucleotide sequence ID" value="NC_003198.1"/>
</dbReference>
<dbReference type="RefSeq" id="WP_000153505.1">
    <property type="nucleotide sequence ID" value="NZ_WSUR01000034.1"/>
</dbReference>
<dbReference type="SMR" id="P0A1P1"/>
<dbReference type="STRING" id="220341.gene:17585756"/>
<dbReference type="KEGG" id="stt:t1169"/>
<dbReference type="KEGG" id="sty:STY1825"/>
<dbReference type="PATRIC" id="fig|220341.7.peg.1837"/>
<dbReference type="eggNOG" id="COG0057">
    <property type="taxonomic scope" value="Bacteria"/>
</dbReference>
<dbReference type="HOGENOM" id="CLU_030140_0_3_6"/>
<dbReference type="OMA" id="YGYTCNM"/>
<dbReference type="OrthoDB" id="9803304at2"/>
<dbReference type="UniPathway" id="UPA00109">
    <property type="reaction ID" value="UER00184"/>
</dbReference>
<dbReference type="Proteomes" id="UP000000541">
    <property type="component" value="Chromosome"/>
</dbReference>
<dbReference type="Proteomes" id="UP000002670">
    <property type="component" value="Chromosome"/>
</dbReference>
<dbReference type="GO" id="GO:0005737">
    <property type="term" value="C:cytoplasm"/>
    <property type="evidence" value="ECO:0007669"/>
    <property type="project" value="UniProtKB-SubCell"/>
</dbReference>
<dbReference type="GO" id="GO:0004365">
    <property type="term" value="F:glyceraldehyde-3-phosphate dehydrogenase (NAD+) (phosphorylating) activity"/>
    <property type="evidence" value="ECO:0000250"/>
    <property type="project" value="UniProtKB"/>
</dbReference>
<dbReference type="GO" id="GO:0051287">
    <property type="term" value="F:NAD binding"/>
    <property type="evidence" value="ECO:0000250"/>
    <property type="project" value="UniProtKB"/>
</dbReference>
<dbReference type="GO" id="GO:0050661">
    <property type="term" value="F:NADP binding"/>
    <property type="evidence" value="ECO:0007669"/>
    <property type="project" value="InterPro"/>
</dbReference>
<dbReference type="GO" id="GO:0006006">
    <property type="term" value="P:glucose metabolic process"/>
    <property type="evidence" value="ECO:0007669"/>
    <property type="project" value="InterPro"/>
</dbReference>
<dbReference type="GO" id="GO:0006096">
    <property type="term" value="P:glycolytic process"/>
    <property type="evidence" value="ECO:0007669"/>
    <property type="project" value="UniProtKB-UniPathway"/>
</dbReference>
<dbReference type="CDD" id="cd18126">
    <property type="entry name" value="GAPDH_I_C"/>
    <property type="match status" value="1"/>
</dbReference>
<dbReference type="CDD" id="cd05214">
    <property type="entry name" value="GAPDH_I_N"/>
    <property type="match status" value="1"/>
</dbReference>
<dbReference type="FunFam" id="3.30.360.10:FF:000001">
    <property type="entry name" value="Glyceraldehyde-3-phosphate dehydrogenase"/>
    <property type="match status" value="1"/>
</dbReference>
<dbReference type="FunFam" id="3.40.50.720:FF:000001">
    <property type="entry name" value="Glyceraldehyde-3-phosphate dehydrogenase"/>
    <property type="match status" value="1"/>
</dbReference>
<dbReference type="Gene3D" id="3.30.360.10">
    <property type="entry name" value="Dihydrodipicolinate Reductase, domain 2"/>
    <property type="match status" value="1"/>
</dbReference>
<dbReference type="Gene3D" id="3.40.50.720">
    <property type="entry name" value="NAD(P)-binding Rossmann-like Domain"/>
    <property type="match status" value="1"/>
</dbReference>
<dbReference type="InterPro" id="IPR020831">
    <property type="entry name" value="GlycerAld/Erythrose_P_DH"/>
</dbReference>
<dbReference type="InterPro" id="IPR020830">
    <property type="entry name" value="GlycerAld_3-P_DH_AS"/>
</dbReference>
<dbReference type="InterPro" id="IPR020829">
    <property type="entry name" value="GlycerAld_3-P_DH_cat"/>
</dbReference>
<dbReference type="InterPro" id="IPR020828">
    <property type="entry name" value="GlycerAld_3-P_DH_NAD(P)-bd"/>
</dbReference>
<dbReference type="InterPro" id="IPR006424">
    <property type="entry name" value="Glyceraldehyde-3-P_DH_1"/>
</dbReference>
<dbReference type="InterPro" id="IPR036291">
    <property type="entry name" value="NAD(P)-bd_dom_sf"/>
</dbReference>
<dbReference type="NCBIfam" id="TIGR01534">
    <property type="entry name" value="GAPDH-I"/>
    <property type="match status" value="1"/>
</dbReference>
<dbReference type="NCBIfam" id="NF011954">
    <property type="entry name" value="PRK15425.1"/>
    <property type="match status" value="1"/>
</dbReference>
<dbReference type="PANTHER" id="PTHR10836">
    <property type="entry name" value="GLYCERALDEHYDE 3-PHOSPHATE DEHYDROGENASE"/>
    <property type="match status" value="1"/>
</dbReference>
<dbReference type="PANTHER" id="PTHR10836:SF76">
    <property type="entry name" value="GLYCERALDEHYDE-3-PHOSPHATE DEHYDROGENASE-RELATED"/>
    <property type="match status" value="1"/>
</dbReference>
<dbReference type="Pfam" id="PF02800">
    <property type="entry name" value="Gp_dh_C"/>
    <property type="match status" value="1"/>
</dbReference>
<dbReference type="Pfam" id="PF00044">
    <property type="entry name" value="Gp_dh_N"/>
    <property type="match status" value="1"/>
</dbReference>
<dbReference type="PIRSF" id="PIRSF000149">
    <property type="entry name" value="GAP_DH"/>
    <property type="match status" value="1"/>
</dbReference>
<dbReference type="PRINTS" id="PR00078">
    <property type="entry name" value="G3PDHDRGNASE"/>
</dbReference>
<dbReference type="SMART" id="SM00846">
    <property type="entry name" value="Gp_dh_N"/>
    <property type="match status" value="1"/>
</dbReference>
<dbReference type="SUPFAM" id="SSF55347">
    <property type="entry name" value="Glyceraldehyde-3-phosphate dehydrogenase-like, C-terminal domain"/>
    <property type="match status" value="1"/>
</dbReference>
<dbReference type="SUPFAM" id="SSF51735">
    <property type="entry name" value="NAD(P)-binding Rossmann-fold domains"/>
    <property type="match status" value="1"/>
</dbReference>
<dbReference type="PROSITE" id="PS00071">
    <property type="entry name" value="GAPDH"/>
    <property type="match status" value="1"/>
</dbReference>
<evidence type="ECO:0000250" key="1"/>
<evidence type="ECO:0000250" key="2">
    <source>
        <dbReference type="UniProtKB" id="P0A9B2"/>
    </source>
</evidence>
<evidence type="ECO:0000305" key="3"/>
<organism>
    <name type="scientific">Salmonella typhi</name>
    <dbReference type="NCBI Taxonomy" id="90370"/>
    <lineage>
        <taxon>Bacteria</taxon>
        <taxon>Pseudomonadati</taxon>
        <taxon>Pseudomonadota</taxon>
        <taxon>Gammaproteobacteria</taxon>
        <taxon>Enterobacterales</taxon>
        <taxon>Enterobacteriaceae</taxon>
        <taxon>Salmonella</taxon>
    </lineage>
</organism>
<accession>P0A1P1</accession>
<accession>P24165</accession>
<keyword id="KW-0963">Cytoplasm</keyword>
<keyword id="KW-0324">Glycolysis</keyword>
<keyword id="KW-0520">NAD</keyword>
<keyword id="KW-0547">Nucleotide-binding</keyword>
<keyword id="KW-0560">Oxidoreductase</keyword>